<protein>
    <recommendedName>
        <fullName evidence="4">Moronecidin</fullName>
    </recommendedName>
    <alternativeName>
        <fullName evidence="5">Piscidin-2</fullName>
    </alternativeName>
</protein>
<accession>Q8UUG2</accession>
<name>MORO_MORCH</name>
<keyword id="KW-0027">Amidation</keyword>
<keyword id="KW-0044">Antibiotic</keyword>
<keyword id="KW-0929">Antimicrobial</keyword>
<keyword id="KW-0930">Antiviral protein</keyword>
<keyword id="KW-0903">Direct protein sequencing</keyword>
<keyword id="KW-0295">Fungicide</keyword>
<keyword id="KW-0391">Immunity</keyword>
<keyword id="KW-0399">Innate immunity</keyword>
<keyword id="KW-0964">Secreted</keyword>
<keyword id="KW-0732">Signal</keyword>
<organism>
    <name type="scientific">Morone chrysops</name>
    <name type="common">White bass</name>
    <name type="synonym">Perca chrysops</name>
    <dbReference type="NCBI Taxonomy" id="46259"/>
    <lineage>
        <taxon>Eukaryota</taxon>
        <taxon>Metazoa</taxon>
        <taxon>Chordata</taxon>
        <taxon>Craniata</taxon>
        <taxon>Vertebrata</taxon>
        <taxon>Euteleostomi</taxon>
        <taxon>Actinopterygii</taxon>
        <taxon>Neopterygii</taxon>
        <taxon>Teleostei</taxon>
        <taxon>Neoteleostei</taxon>
        <taxon>Acanthomorphata</taxon>
        <taxon>Eupercaria</taxon>
        <taxon>Moronidae</taxon>
        <taxon>Morone</taxon>
    </lineage>
</organism>
<proteinExistence type="evidence at protein level"/>
<reference key="1">
    <citation type="journal article" date="2002" name="J. Biol. Chem.">
        <title>Discovery and characterization of two isoforms of moronecidin, a novel antimicrobial peptide from hybrid striped bass.</title>
        <authorList>
            <person name="Lauth X."/>
            <person name="Shike H."/>
            <person name="Burns J.C."/>
            <person name="Westerman M.E."/>
            <person name="Ostland V.E."/>
            <person name="Carlberg J.M."/>
            <person name="Van Olst J.C."/>
            <person name="Nizet V."/>
            <person name="Taylor S.W."/>
            <person name="Shimizu C."/>
            <person name="Bulet P."/>
        </authorList>
    </citation>
    <scope>NUCLEOTIDE SEQUENCE [GENOMIC DNA / MRNA]</scope>
    <scope>PROTEIN SEQUENCE OF 23-41</scope>
    <scope>FUNCTION</scope>
    <scope>SYNTHESIS OF 23-44</scope>
    <scope>AMIDATION AT GLY-44</scope>
    <scope>MASS SPECTROMETRY</scope>
    <scope>TISSUE SPECIFICITY</scope>
    <source>
        <tissue>Gill</tissue>
        <tissue>Skin</tissue>
    </source>
</reference>
<reference key="2">
    <citation type="journal article" date="2004" name="Virology">
        <title>Inactivation of viruses infecting ectothermic animals by amphibian and piscine antimicrobial peptides.</title>
        <authorList>
            <person name="Chinchar V.G."/>
            <person name="Bryan L."/>
            <person name="Silphadaung U."/>
            <person name="Noga E."/>
            <person name="Wade D."/>
            <person name="Rollins-Smith L."/>
        </authorList>
    </citation>
    <scope>FUNCTION AS ANTIVIRAL PEPTIDE</scope>
</reference>
<comment type="function">
    <text evidence="2 3">Antimicrobial peptide with broad-spectrum activity against Gram-positive and Gram-negative bacteria as well as against a variety of fungi (PubMed:11739390). Rapidly inactivates both channel catfish herpesvirus (ED(50)=4 uM) and frog virus 3 (ED(50)=13 uM) over a wide temperature range (PubMed:15193922). Seems to disrupt the membranes by adopting an alpha helical conformation (PubMed:11739390).</text>
</comment>
<comment type="subcellular location">
    <subcellularLocation>
        <location>Secreted</location>
    </subcellularLocation>
</comment>
<comment type="tissue specificity">
    <text evidence="2">Expressed in gill, skin, intestine, spleen, anterior kidney, and blood cells.</text>
</comment>
<comment type="mass spectrometry"/>
<comment type="similarity">
    <text evidence="6">Belongs to the pleurocidin family.</text>
</comment>
<evidence type="ECO:0000256" key="1">
    <source>
        <dbReference type="SAM" id="MobiDB-lite"/>
    </source>
</evidence>
<evidence type="ECO:0000269" key="2">
    <source>
    </source>
</evidence>
<evidence type="ECO:0000269" key="3">
    <source>
    </source>
</evidence>
<evidence type="ECO:0000303" key="4">
    <source>
    </source>
</evidence>
<evidence type="ECO:0000303" key="5">
    <source>
    </source>
</evidence>
<evidence type="ECO:0000305" key="6"/>
<sequence>MKCATLSLVLSMVVLMAEPGDAFFHHIFRGIVHVGKTIHKLVTGGKAEQDQQDQQYQQDQQDQQAQQYQRFNRERAAFD</sequence>
<feature type="signal peptide" evidence="2">
    <location>
        <begin position="1"/>
        <end position="22"/>
    </location>
</feature>
<feature type="peptide" id="PRO_0000000283" description="Moronecidin" evidence="2">
    <location>
        <begin position="23"/>
        <end position="44"/>
    </location>
</feature>
<feature type="propeptide" id="PRO_0000000284">
    <location>
        <begin position="47"/>
        <end position="79"/>
    </location>
</feature>
<feature type="region of interest" description="Disordered" evidence="1">
    <location>
        <begin position="45"/>
        <end position="68"/>
    </location>
</feature>
<feature type="compositionally biased region" description="Low complexity" evidence="1">
    <location>
        <begin position="52"/>
        <end position="68"/>
    </location>
</feature>
<feature type="modified residue" description="Glycine amide" evidence="2">
    <location>
        <position position="44"/>
    </location>
</feature>
<dbReference type="EMBL" id="AF332621">
    <property type="protein sequence ID" value="AAL40409.1"/>
    <property type="molecule type" value="mRNA"/>
</dbReference>
<dbReference type="EMBL" id="AF394243">
    <property type="protein sequence ID" value="AAL57318.1"/>
    <property type="molecule type" value="Genomic_DNA"/>
</dbReference>
<dbReference type="GO" id="GO:0005576">
    <property type="term" value="C:extracellular region"/>
    <property type="evidence" value="ECO:0007669"/>
    <property type="project" value="UniProtKB-SubCell"/>
</dbReference>
<dbReference type="GO" id="GO:0042742">
    <property type="term" value="P:defense response to bacterium"/>
    <property type="evidence" value="ECO:0007669"/>
    <property type="project" value="UniProtKB-KW"/>
</dbReference>
<dbReference type="GO" id="GO:0050832">
    <property type="term" value="P:defense response to fungus"/>
    <property type="evidence" value="ECO:0007669"/>
    <property type="project" value="UniProtKB-KW"/>
</dbReference>
<dbReference type="GO" id="GO:0045087">
    <property type="term" value="P:innate immune response"/>
    <property type="evidence" value="ECO:0007669"/>
    <property type="project" value="UniProtKB-KW"/>
</dbReference>
<dbReference type="GO" id="GO:0031640">
    <property type="term" value="P:killing of cells of another organism"/>
    <property type="evidence" value="ECO:0007669"/>
    <property type="project" value="UniProtKB-KW"/>
</dbReference>
<dbReference type="GO" id="GO:0050688">
    <property type="term" value="P:regulation of defense response to virus"/>
    <property type="evidence" value="ECO:0007669"/>
    <property type="project" value="UniProtKB-KW"/>
</dbReference>
<dbReference type="InterPro" id="IPR012515">
    <property type="entry name" value="Antimicrobial12"/>
</dbReference>
<dbReference type="Pfam" id="PF08107">
    <property type="entry name" value="Antimicrobial12"/>
    <property type="match status" value="1"/>
</dbReference>